<protein>
    <recommendedName>
        <fullName evidence="3">Dynamin-2</fullName>
        <ecNumber evidence="1 3">3.6.5.5</ecNumber>
    </recommendedName>
</protein>
<reference key="1">
    <citation type="submission" date="2007-06" db="EMBL/GenBank/DDBJ databases">
        <authorList>
            <consortium name="NIH - Mammalian Gene Collection (MGC) project"/>
        </authorList>
    </citation>
    <scope>NUCLEOTIDE SEQUENCE [LARGE SCALE MRNA]</scope>
    <source>
        <strain>Hereford</strain>
        <tissue>Fetal muscle</tissue>
    </source>
</reference>
<gene>
    <name evidence="3" type="primary">DNM2</name>
</gene>
<feature type="chain" id="PRO_0000319950" description="Dynamin-2">
    <location>
        <begin position="1"/>
        <end position="866"/>
    </location>
</feature>
<feature type="domain" description="Dynamin-type G" evidence="7">
    <location>
        <begin position="28"/>
        <end position="294"/>
    </location>
</feature>
<feature type="domain" description="PH" evidence="5">
    <location>
        <begin position="515"/>
        <end position="621"/>
    </location>
</feature>
<feature type="domain" description="GED" evidence="6">
    <location>
        <begin position="649"/>
        <end position="740"/>
    </location>
</feature>
<feature type="region of interest" description="G1 motif" evidence="7">
    <location>
        <begin position="38"/>
        <end position="45"/>
    </location>
</feature>
<feature type="region of interest" description="G2 motif" evidence="7">
    <location>
        <begin position="64"/>
        <end position="66"/>
    </location>
</feature>
<feature type="region of interest" description="G3 motif" evidence="7">
    <location>
        <begin position="136"/>
        <end position="139"/>
    </location>
</feature>
<feature type="region of interest" description="G4 motif" evidence="7">
    <location>
        <begin position="205"/>
        <end position="208"/>
    </location>
</feature>
<feature type="region of interest" description="G5 motif" evidence="7">
    <location>
        <begin position="235"/>
        <end position="238"/>
    </location>
</feature>
<feature type="region of interest" description="Disordered" evidence="8">
    <location>
        <begin position="737"/>
        <end position="866"/>
    </location>
</feature>
<feature type="compositionally biased region" description="Polar residues" evidence="8">
    <location>
        <begin position="752"/>
        <end position="763"/>
    </location>
</feature>
<feature type="compositionally biased region" description="Pro residues" evidence="8">
    <location>
        <begin position="784"/>
        <end position="794"/>
    </location>
</feature>
<feature type="compositionally biased region" description="Pro residues" evidence="8">
    <location>
        <begin position="802"/>
        <end position="811"/>
    </location>
</feature>
<feature type="compositionally biased region" description="Pro residues" evidence="8">
    <location>
        <begin position="822"/>
        <end position="851"/>
    </location>
</feature>
<feature type="binding site" evidence="4">
    <location>
        <position position="41"/>
    </location>
    <ligand>
        <name>GDP</name>
        <dbReference type="ChEBI" id="CHEBI:58189"/>
    </ligand>
</feature>
<feature type="binding site" evidence="4">
    <location>
        <position position="43"/>
    </location>
    <ligand>
        <name>GDP</name>
        <dbReference type="ChEBI" id="CHEBI:58189"/>
    </ligand>
</feature>
<feature type="binding site" evidence="4">
    <location>
        <position position="44"/>
    </location>
    <ligand>
        <name>GDP</name>
        <dbReference type="ChEBI" id="CHEBI:58189"/>
    </ligand>
</feature>
<feature type="binding site" evidence="4">
    <location>
        <position position="45"/>
    </location>
    <ligand>
        <name>GDP</name>
        <dbReference type="ChEBI" id="CHEBI:58189"/>
    </ligand>
</feature>
<feature type="binding site" evidence="4">
    <location>
        <position position="46"/>
    </location>
    <ligand>
        <name>GDP</name>
        <dbReference type="ChEBI" id="CHEBI:58189"/>
    </ligand>
</feature>
<feature type="binding site" evidence="4">
    <location>
        <position position="59"/>
    </location>
    <ligand>
        <name>GDP</name>
        <dbReference type="ChEBI" id="CHEBI:58189"/>
    </ligand>
</feature>
<feature type="binding site" evidence="4">
    <location>
        <position position="60"/>
    </location>
    <ligand>
        <name>GDP</name>
        <dbReference type="ChEBI" id="CHEBI:58189"/>
    </ligand>
</feature>
<feature type="binding site" evidence="4">
    <location>
        <position position="206"/>
    </location>
    <ligand>
        <name>GDP</name>
        <dbReference type="ChEBI" id="CHEBI:58189"/>
    </ligand>
</feature>
<feature type="binding site" evidence="4">
    <location>
        <position position="208"/>
    </location>
    <ligand>
        <name>GDP</name>
        <dbReference type="ChEBI" id="CHEBI:58189"/>
    </ligand>
</feature>
<feature type="binding site" evidence="4">
    <location>
        <position position="211"/>
    </location>
    <ligand>
        <name>GDP</name>
        <dbReference type="ChEBI" id="CHEBI:58189"/>
    </ligand>
</feature>
<feature type="binding site" evidence="4">
    <location>
        <position position="236"/>
    </location>
    <ligand>
        <name>GDP</name>
        <dbReference type="ChEBI" id="CHEBI:58189"/>
    </ligand>
</feature>
<feature type="binding site" evidence="4">
    <location>
        <position position="237"/>
    </location>
    <ligand>
        <name>GDP</name>
        <dbReference type="ChEBI" id="CHEBI:58189"/>
    </ligand>
</feature>
<feature type="binding site" evidence="4">
    <location>
        <position position="239"/>
    </location>
    <ligand>
        <name>GDP</name>
        <dbReference type="ChEBI" id="CHEBI:58189"/>
    </ligand>
</feature>
<feature type="modified residue" description="Phosphotyrosine" evidence="1">
    <location>
        <position position="231"/>
    </location>
</feature>
<feature type="modified residue" description="N6-acetyllysine" evidence="2">
    <location>
        <position position="299"/>
    </location>
</feature>
<feature type="modified residue" description="Phosphotyrosine" evidence="1">
    <location>
        <position position="593"/>
    </location>
</feature>
<feature type="modified residue" description="N6-acetyllysine" evidence="3">
    <location>
        <position position="594"/>
    </location>
</feature>
<feature type="modified residue" description="Phosphothreonine" evidence="3">
    <location>
        <position position="751"/>
    </location>
</feature>
<feature type="modified residue" description="Phosphoserine; by CDK1" evidence="1">
    <location>
        <position position="760"/>
    </location>
</feature>
<sequence>MGNRGMEELIPLVNKLQDAFSSIGQSCHLDLPQIAVVGGQSAGKSSVLENFVGRDFLPRGSGIVTRRPLILQLIFSKTEYAEFLHCKSRKFTDFEEVRQEIEAETDRVTGTNKGISPVPINLRIYSPHVLNLTLIDLPGITKVPVGDQPQDIEYQIKDMILQFISRESSLILAVTPANMDLANSDALKLAKEVDPQGLRTIGVITKLDLMDEGTDARDVLENKLLPLRRGYIGVVNRSQKDIEGKKDIRTALAAERKFFLSHPAYRHIADRMGTPHLQKTLNQQLTNHIRESLPALRSKLQSQLLSLEKEVEEYKNFRPDDPTRKTKALLQMVQQFGVDFEKRIEGSGDQVDTLELSGGARINRIFHERFPFELVKMEFDEKDLRREISYAIKNIHGVRTGLFTPDLAFEAIVKKQVVKLKEPCLKCVDLVIQELINTVRQCTSKLSSYPRLREETERIVTTYIREREGRTKDQILLLIDIEQSYINTNHEDFIGFANAQQRSTQLNKKRAVPNQVIRRGWLTINNISLMKGGSKEYWFVLTAESLSWYKDEEEKEKKYMLPLDNLKIRDVEKGFMSNKHVFAIFNTEQRNVYKDLRQIELACDSQEDVDSWKASFLRAGVYPEKDQAENEDGAQENTFSMDPQLERQVETIRNLVDSYVAIINKSIRDLMPKTIMHLMINNTKAFIHYELLAYLYSSADQSSLMEESADQAQRRDDMLRMYHALKEALNIIGDISTSTVSTPVPPPVDDTWIQNTSSHSPTPQRRPVSSVHPPGRPPAVRGPTPGPPLIPVPVGPASFSAPPIPSRPGPHPGVFANNDPFSAPPQIPSRPARIPPGIPPGVPSRRPPAAPSRPTIIRPAEPSLLD</sequence>
<proteinExistence type="evidence at transcript level"/>
<keyword id="KW-0007">Acetylation</keyword>
<keyword id="KW-0965">Cell junction</keyword>
<keyword id="KW-0966">Cell projection</keyword>
<keyword id="KW-0168">Coated pit</keyword>
<keyword id="KW-0963">Cytoplasm</keyword>
<keyword id="KW-0968">Cytoplasmic vesicle</keyword>
<keyword id="KW-0206">Cytoskeleton</keyword>
<keyword id="KW-0254">Endocytosis</keyword>
<keyword id="KW-0967">Endosome</keyword>
<keyword id="KW-0342">GTP-binding</keyword>
<keyword id="KW-0378">Hydrolase</keyword>
<keyword id="KW-0472">Membrane</keyword>
<keyword id="KW-0493">Microtubule</keyword>
<keyword id="KW-0505">Motor protein</keyword>
<keyword id="KW-0547">Nucleotide-binding</keyword>
<keyword id="KW-0581">Phagocytosis</keyword>
<keyword id="KW-0597">Phosphoprotein</keyword>
<keyword id="KW-1185">Reference proteome</keyword>
<keyword id="KW-0770">Synapse</keyword>
<keyword id="KW-0771">Synaptosome</keyword>
<organism>
    <name type="scientific">Bos taurus</name>
    <name type="common">Bovine</name>
    <dbReference type="NCBI Taxonomy" id="9913"/>
    <lineage>
        <taxon>Eukaryota</taxon>
        <taxon>Metazoa</taxon>
        <taxon>Chordata</taxon>
        <taxon>Craniata</taxon>
        <taxon>Vertebrata</taxon>
        <taxon>Euteleostomi</taxon>
        <taxon>Mammalia</taxon>
        <taxon>Eutheria</taxon>
        <taxon>Laurasiatheria</taxon>
        <taxon>Artiodactyla</taxon>
        <taxon>Ruminantia</taxon>
        <taxon>Pecora</taxon>
        <taxon>Bovidae</taxon>
        <taxon>Bovinae</taxon>
        <taxon>Bos</taxon>
    </lineage>
</organism>
<evidence type="ECO:0000250" key="1">
    <source>
        <dbReference type="UniProtKB" id="P39052"/>
    </source>
</evidence>
<evidence type="ECO:0000250" key="2">
    <source>
        <dbReference type="UniProtKB" id="P39054"/>
    </source>
</evidence>
<evidence type="ECO:0000250" key="3">
    <source>
        <dbReference type="UniProtKB" id="P50570"/>
    </source>
</evidence>
<evidence type="ECO:0000250" key="4">
    <source>
        <dbReference type="UniProtKB" id="Q05193"/>
    </source>
</evidence>
<evidence type="ECO:0000255" key="5">
    <source>
        <dbReference type="PROSITE-ProRule" id="PRU00145"/>
    </source>
</evidence>
<evidence type="ECO:0000255" key="6">
    <source>
        <dbReference type="PROSITE-ProRule" id="PRU00720"/>
    </source>
</evidence>
<evidence type="ECO:0000255" key="7">
    <source>
        <dbReference type="PROSITE-ProRule" id="PRU01055"/>
    </source>
</evidence>
<evidence type="ECO:0000256" key="8">
    <source>
        <dbReference type="SAM" id="MobiDB-lite"/>
    </source>
</evidence>
<accession>A6H7I5</accession>
<comment type="function">
    <text evidence="1 2 3">Catalyzes the hydrolysis of GTP and utilizes this energy to mediate vesicle scission at plasma membrane during endocytosis and filament remodeling at many actin structures during organization of the actin cytoskeleton. Plays an important role in vesicular trafficking processes, namely clathrin-mediated endocytosis (CME), exocytic and clathrin-coated vesicle from the trans-Golgi network, and PDGF stimulated macropinocytosis. During vesicular trafficking process, associates to the membrane, through lipid binding, and self-assembles into ring-like structure through oligomerization to form a helical polymer around the vesicle membrane and leading to vesicle scission (By similarity). Plays a role in organization of the actin cytoskeleton by mediating arrangement of stress fibers and actin bundles in podocytes. During organization of the actin cytoskeleton, self-assembles into ring-like structure that directly bundles actin filaments to form typical membrane tubules decorated with dynamin spiral polymers (By similarity). Self-assembly increases GTPase activity and the GTP hydrolysis causes the rapid depolymerization of dynamin spiral polymers, and results in dispersion of actin bundles (By similarity). Remodels, through its interaction with CTTN, bundled actin filaments in a GTPase-dependent manner and plays a role in orchestrating the global actomyosin cytoskeleton (By similarity). The interaction with CTTN stabilizes the interaction of DNM2 and actin filaments and stimulates the intrinsic GTPase activity that results in actin filament-barbed ends and increases the sensitivity of filaments in bundles to the actin depolymerizing factor, CFL1 (By similarity). Plays a role in the autophagy process, by participating in the formation of ATG9A vesicles destined for the autophagosomes through its interaction with SNX18, by mediating recycling endosome scission leading to autophagosome release through MAP1LC3B interaction (By similarity). Also regulates maturation of apoptotic cell corpse-containing phagosomes by recruiting PIK3C3 to the phagosome membrane (By similarity). Also plays a role in cytokinesis (By similarity). May participate in centrosome cohesion through its interaction with TUBG1. Plays a role in the regulation of neuron morphology, axon growth and formation of neuronal growth cones (By similarity). Involved in membrane tubulation (By similarity).</text>
</comment>
<comment type="catalytic activity">
    <reaction evidence="3">
        <text>GTP + H2O = GDP + phosphate + H(+)</text>
        <dbReference type="Rhea" id="RHEA:19669"/>
        <dbReference type="ChEBI" id="CHEBI:15377"/>
        <dbReference type="ChEBI" id="CHEBI:15378"/>
        <dbReference type="ChEBI" id="CHEBI:37565"/>
        <dbReference type="ChEBI" id="CHEBI:43474"/>
        <dbReference type="ChEBI" id="CHEBI:58189"/>
        <dbReference type="EC" id="3.6.5.5"/>
    </reaction>
    <physiologicalReaction direction="left-to-right" evidence="1 3">
        <dbReference type="Rhea" id="RHEA:19670"/>
    </physiologicalReaction>
</comment>
<comment type="subunit">
    <text evidence="1 2 3">Oligomerizes into a helical polymer that self-assembles around the vesicle membrane, when associated to the menbrane through lipid binding. Interacts with SHANK1 and SHANK2. Interacts with SNX9. Interacts (via C-terminal proline-rich domain (PRD)) with SNX18 (via SH3 domain); this interaction regulates ATG9A and ATG16L1 trafficking from recycling endosomes to sites of autophagosome formation. Interacts with SNX33 (via SH3 domain). Interacts with MYO1E (via SH3 domain). Interacts with PSTPIP1 (via SH3 domain). Interacts with CTNND2. Interacts (via C-terminal proline-rich domain (PRD)) with BIN1 (via SH3 domain); this interaction allows the recruitment of DNM2 to the membrane tubules and inhibits self-assembly-stimulated GTPase activity on the membrane. Interacts with GABARAP, GABARAPL1 and GABARAPL2. Interacts with MAP1LC3B (the lipidate and non-lipidated LC3 form); this interaction mediates recycling endosome scission leading to autophagosome release. Interacts with ITSN1. Interacts with MYOF. Interacts (via C-terminal proline-rich domain (PRD)) with SH3BP4 (via SH3 domain); this interaction controls the GTPase activity and is prevented by EGFR-induced tyrosine phosphorylation of either DNM2 or SH3BP4 (By similarity). May interact with PIK3C3. May be a component of a complex composed of RAB5A (in GDP-bound form), DYN2 and PIK3C3. Interacts with SDC4; this interaction is markedly enhanced at focal ahesion site upon induction of focal adhesions and stress-fiber formation (By similarity). Interacts with ACTN1. Interacts with CTTN; this interaction stimulates the intrinsic GTPase activity of DNM2 and stabilizes the association of DNM2 and actin filaments; in addition this interaction is stimulated by ligand binding to the receptor, leading to the recruitment of the DNM2-CTTN complex to the sequestered receptor-ligand complex to its internalization. Interacts with NOSTRIN (via SH3 domain); this interaction allows the recruitment of NOS3 to dynamin-positive structures. Interacts with TUBG1; this interaction may participate in centrosome cohesion (By similarity).</text>
</comment>
<comment type="subcellular location">
    <subcellularLocation>
        <location evidence="3">Cytoplasm</location>
        <location evidence="3">Cytoskeleton</location>
    </subcellularLocation>
    <subcellularLocation>
        <location evidence="3">Cytoplasmic vesicle</location>
        <location evidence="3">Clathrin-coated vesicle</location>
    </subcellularLocation>
    <subcellularLocation>
        <location evidence="3">Cell projection</location>
        <location evidence="3">Uropodium</location>
    </subcellularLocation>
    <subcellularLocation>
        <location evidence="3">Endosome</location>
    </subcellularLocation>
    <subcellularLocation>
        <location evidence="3">Cytoplasm</location>
        <location evidence="3">Cytoskeleton</location>
        <location evidence="3">Microtubule organizing center</location>
        <location evidence="3">Centrosome</location>
    </subcellularLocation>
    <subcellularLocation>
        <location evidence="3">Cytoplasm</location>
        <location evidence="3">Cytoskeleton</location>
        <location evidence="3">Microtubule organizing center</location>
        <location evidence="3">Centrosome</location>
        <location evidence="3">Centriole</location>
    </subcellularLocation>
    <subcellularLocation>
        <location evidence="3">Recycling endosome</location>
    </subcellularLocation>
    <subcellularLocation>
        <location evidence="2">Cell projection</location>
        <location evidence="2">Phagocytic cup</location>
    </subcellularLocation>
    <subcellularLocation>
        <location evidence="2">Cytoplasmic vesicle</location>
        <location evidence="2">Phagosome membrane</location>
        <topology evidence="2">Peripheral membrane protein</topology>
    </subcellularLocation>
    <subcellularLocation>
        <location evidence="2">Cell projection</location>
        <location evidence="2">Podosome</location>
    </subcellularLocation>
    <subcellularLocation>
        <location evidence="1">Cytoplasm</location>
    </subcellularLocation>
    <subcellularLocation>
        <location evidence="1">Cell junction</location>
    </subcellularLocation>
    <subcellularLocation>
        <location evidence="1">Postsynaptic density</location>
    </subcellularLocation>
    <subcellularLocation>
        <location evidence="1">Synapse</location>
        <location evidence="1">Synaptosome</location>
    </subcellularLocation>
    <subcellularLocation>
        <location evidence="1">Midbody</location>
    </subcellularLocation>
    <subcellularLocation>
        <location evidence="1">Membrane</location>
        <location evidence="1">Clathrin-coated pit</location>
    </subcellularLocation>
    <text evidence="1 2 3">Localized in recycling endosomes fragment to release nascent autophagosomes (By similarity). Co-localizes with PIK3C3 and RAB5A to the nascent phagosome. Localized at focal ahesion site upon induction of focal adhesions and stress-fiber formation, when interacts with SDC4 (By similarity). Exists as a dynamic component of the centrosome. Associates with clathrin-coated vesicles at both the plasma membrane and the trans-Golgi network (TGN) (By similarity).</text>
</comment>
<comment type="PTM">
    <text evidence="1 2 3">Phosphorylation at Ser-844 by GSK3-alpha relieves the inhibition of BIN1 and promotes endocytosis. Phosphorylation at Ser-760 by CDK1 is greatly increased upon mitotic entry (By similarity). It regulates cytokinesis downstream of calcineurin, and does not affect clathrin-mediated endocytosis (By similarity). Dephosphorylated by calcineurin/PP2 during cytokinesis in a Ca(2+)- and calmodulin-dependent manner (By similarity). Phosphorylated on tyrosine residues by EGFR and after activation of SRC (By similarity).</text>
</comment>
<comment type="similarity">
    <text evidence="7">Belongs to the TRAFAC class dynamin-like GTPase superfamily. Dynamin/Fzo/YdjA family.</text>
</comment>
<dbReference type="EC" id="3.6.5.5" evidence="1 3"/>
<dbReference type="EMBL" id="BC146259">
    <property type="protein sequence ID" value="AAI46260.1"/>
    <property type="molecule type" value="mRNA"/>
</dbReference>
<dbReference type="RefSeq" id="NP_001092839.1">
    <property type="nucleotide sequence ID" value="NM_001099369.1"/>
</dbReference>
<dbReference type="BMRB" id="A6H7I5"/>
<dbReference type="SMR" id="A6H7I5"/>
<dbReference type="FunCoup" id="A6H7I5">
    <property type="interactions" value="2761"/>
</dbReference>
<dbReference type="STRING" id="9913.ENSBTAP00000073131"/>
<dbReference type="PaxDb" id="9913-ENSBTAP00000035986"/>
<dbReference type="GeneID" id="511691"/>
<dbReference type="KEGG" id="bta:511691"/>
<dbReference type="CTD" id="1785"/>
<dbReference type="eggNOG" id="KOG0446">
    <property type="taxonomic scope" value="Eukaryota"/>
</dbReference>
<dbReference type="InParanoid" id="A6H7I5"/>
<dbReference type="OrthoDB" id="5061070at2759"/>
<dbReference type="BRENDA" id="3.6.5.5">
    <property type="organism ID" value="908"/>
</dbReference>
<dbReference type="Proteomes" id="UP000009136">
    <property type="component" value="Unplaced"/>
</dbReference>
<dbReference type="GO" id="GO:0070161">
    <property type="term" value="C:anchoring junction"/>
    <property type="evidence" value="ECO:0007669"/>
    <property type="project" value="UniProtKB-SubCell"/>
</dbReference>
<dbReference type="GO" id="GO:0030054">
    <property type="term" value="C:cell junction"/>
    <property type="evidence" value="ECO:0000250"/>
    <property type="project" value="UniProtKB"/>
</dbReference>
<dbReference type="GO" id="GO:0005814">
    <property type="term" value="C:centriole"/>
    <property type="evidence" value="ECO:0000250"/>
    <property type="project" value="UniProtKB"/>
</dbReference>
<dbReference type="GO" id="GO:0005813">
    <property type="term" value="C:centrosome"/>
    <property type="evidence" value="ECO:0000250"/>
    <property type="project" value="UniProtKB"/>
</dbReference>
<dbReference type="GO" id="GO:0005905">
    <property type="term" value="C:clathrin-coated pit"/>
    <property type="evidence" value="ECO:0000250"/>
    <property type="project" value="UniProtKB"/>
</dbReference>
<dbReference type="GO" id="GO:0030136">
    <property type="term" value="C:clathrin-coated vesicle"/>
    <property type="evidence" value="ECO:0000250"/>
    <property type="project" value="UniProtKB"/>
</dbReference>
<dbReference type="GO" id="GO:0005737">
    <property type="term" value="C:cytoplasm"/>
    <property type="evidence" value="ECO:0000318"/>
    <property type="project" value="GO_Central"/>
</dbReference>
<dbReference type="GO" id="GO:0005768">
    <property type="term" value="C:endosome"/>
    <property type="evidence" value="ECO:0000250"/>
    <property type="project" value="UniProtKB"/>
</dbReference>
<dbReference type="GO" id="GO:0005874">
    <property type="term" value="C:microtubule"/>
    <property type="evidence" value="ECO:0000250"/>
    <property type="project" value="UniProtKB"/>
</dbReference>
<dbReference type="GO" id="GO:0030496">
    <property type="term" value="C:midbody"/>
    <property type="evidence" value="ECO:0007669"/>
    <property type="project" value="UniProtKB-SubCell"/>
</dbReference>
<dbReference type="GO" id="GO:0043005">
    <property type="term" value="C:neuron projection"/>
    <property type="evidence" value="ECO:0000250"/>
    <property type="project" value="UniProtKB"/>
</dbReference>
<dbReference type="GO" id="GO:0001891">
    <property type="term" value="C:phagocytic cup"/>
    <property type="evidence" value="ECO:0007669"/>
    <property type="project" value="UniProtKB-SubCell"/>
</dbReference>
<dbReference type="GO" id="GO:0030670">
    <property type="term" value="C:phagocytic vesicle membrane"/>
    <property type="evidence" value="ECO:0007669"/>
    <property type="project" value="UniProtKB-SubCell"/>
</dbReference>
<dbReference type="GO" id="GO:0005886">
    <property type="term" value="C:plasma membrane"/>
    <property type="evidence" value="ECO:0000318"/>
    <property type="project" value="GO_Central"/>
</dbReference>
<dbReference type="GO" id="GO:0002102">
    <property type="term" value="C:podosome"/>
    <property type="evidence" value="ECO:0007669"/>
    <property type="project" value="UniProtKB-SubCell"/>
</dbReference>
<dbReference type="GO" id="GO:0014069">
    <property type="term" value="C:postsynaptic density"/>
    <property type="evidence" value="ECO:0000250"/>
    <property type="project" value="UniProtKB"/>
</dbReference>
<dbReference type="GO" id="GO:0098793">
    <property type="term" value="C:presynapse"/>
    <property type="evidence" value="ECO:0007669"/>
    <property type="project" value="GOC"/>
</dbReference>
<dbReference type="GO" id="GO:0055037">
    <property type="term" value="C:recycling endosome"/>
    <property type="evidence" value="ECO:0000250"/>
    <property type="project" value="UniProtKB"/>
</dbReference>
<dbReference type="GO" id="GO:0045202">
    <property type="term" value="C:synapse"/>
    <property type="evidence" value="ECO:0000318"/>
    <property type="project" value="GO_Central"/>
</dbReference>
<dbReference type="GO" id="GO:0001931">
    <property type="term" value="C:uropod"/>
    <property type="evidence" value="ECO:0000250"/>
    <property type="project" value="UniProtKB"/>
</dbReference>
<dbReference type="GO" id="GO:0005525">
    <property type="term" value="F:GTP binding"/>
    <property type="evidence" value="ECO:0007669"/>
    <property type="project" value="UniProtKB-KW"/>
</dbReference>
<dbReference type="GO" id="GO:0003924">
    <property type="term" value="F:GTPase activity"/>
    <property type="evidence" value="ECO:0000250"/>
    <property type="project" value="UniProtKB"/>
</dbReference>
<dbReference type="GO" id="GO:0008017">
    <property type="term" value="F:microtubule binding"/>
    <property type="evidence" value="ECO:0000318"/>
    <property type="project" value="GO_Central"/>
</dbReference>
<dbReference type="GO" id="GO:0005546">
    <property type="term" value="F:phosphatidylinositol-4,5-bisphosphate binding"/>
    <property type="evidence" value="ECO:0000250"/>
    <property type="project" value="UniProtKB"/>
</dbReference>
<dbReference type="GO" id="GO:0061572">
    <property type="term" value="P:actin filament bundle organization"/>
    <property type="evidence" value="ECO:0000250"/>
    <property type="project" value="UniProtKB"/>
</dbReference>
<dbReference type="GO" id="GO:0006914">
    <property type="term" value="P:autophagy"/>
    <property type="evidence" value="ECO:0000250"/>
    <property type="project" value="UniProtKB"/>
</dbReference>
<dbReference type="GO" id="GO:0007098">
    <property type="term" value="P:centrosome cycle"/>
    <property type="evidence" value="ECO:0000250"/>
    <property type="project" value="UniProtKB"/>
</dbReference>
<dbReference type="GO" id="GO:0097749">
    <property type="term" value="P:membrane tubulation"/>
    <property type="evidence" value="ECO:0000250"/>
    <property type="project" value="UniProtKB"/>
</dbReference>
<dbReference type="GO" id="GO:0048812">
    <property type="term" value="P:neuron projection morphogenesis"/>
    <property type="evidence" value="ECO:0000250"/>
    <property type="project" value="UniProtKB"/>
</dbReference>
<dbReference type="GO" id="GO:0006909">
    <property type="term" value="P:phagocytosis"/>
    <property type="evidence" value="ECO:0007669"/>
    <property type="project" value="UniProtKB-KW"/>
</dbReference>
<dbReference type="GO" id="GO:0051258">
    <property type="term" value="P:protein polymerization"/>
    <property type="evidence" value="ECO:0000250"/>
    <property type="project" value="UniProtKB"/>
</dbReference>
<dbReference type="GO" id="GO:0031623">
    <property type="term" value="P:receptor internalization"/>
    <property type="evidence" value="ECO:0000318"/>
    <property type="project" value="GO_Central"/>
</dbReference>
<dbReference type="GO" id="GO:0006898">
    <property type="term" value="P:receptor-mediated endocytosis"/>
    <property type="evidence" value="ECO:0000250"/>
    <property type="project" value="UniProtKB"/>
</dbReference>
<dbReference type="GO" id="GO:0030516">
    <property type="term" value="P:regulation of axon extension"/>
    <property type="evidence" value="ECO:0000250"/>
    <property type="project" value="UniProtKB"/>
</dbReference>
<dbReference type="GO" id="GO:0043149">
    <property type="term" value="P:stress fiber assembly"/>
    <property type="evidence" value="ECO:0000250"/>
    <property type="project" value="UniProtKB"/>
</dbReference>
<dbReference type="GO" id="GO:0016185">
    <property type="term" value="P:synaptic vesicle budding from presynaptic endocytic zone membrane"/>
    <property type="evidence" value="ECO:0000318"/>
    <property type="project" value="GO_Central"/>
</dbReference>
<dbReference type="GO" id="GO:0099050">
    <property type="term" value="P:vesicle scission"/>
    <property type="evidence" value="ECO:0000250"/>
    <property type="project" value="UniProtKB"/>
</dbReference>
<dbReference type="CDD" id="cd08771">
    <property type="entry name" value="DLP_1"/>
    <property type="match status" value="1"/>
</dbReference>
<dbReference type="CDD" id="cd01256">
    <property type="entry name" value="PH_dynamin"/>
    <property type="match status" value="1"/>
</dbReference>
<dbReference type="FunFam" id="1.20.120.1240:FF:000019">
    <property type="entry name" value="Dynamin 2"/>
    <property type="match status" value="1"/>
</dbReference>
<dbReference type="FunFam" id="1.20.120.1240:FF:000014">
    <property type="entry name" value="Dynamin 2b"/>
    <property type="match status" value="1"/>
</dbReference>
<dbReference type="FunFam" id="2.30.29.30:FF:000010">
    <property type="entry name" value="dynamin-1 isoform X2"/>
    <property type="match status" value="1"/>
</dbReference>
<dbReference type="FunFam" id="3.40.50.300:FF:000045">
    <property type="entry name" value="dynamin-1 isoform X2"/>
    <property type="match status" value="1"/>
</dbReference>
<dbReference type="Gene3D" id="1.20.120.1240">
    <property type="entry name" value="Dynamin, middle domain"/>
    <property type="match status" value="1"/>
</dbReference>
<dbReference type="Gene3D" id="3.40.50.300">
    <property type="entry name" value="P-loop containing nucleotide triphosphate hydrolases"/>
    <property type="match status" value="1"/>
</dbReference>
<dbReference type="Gene3D" id="2.30.29.30">
    <property type="entry name" value="Pleckstrin-homology domain (PH domain)/Phosphotyrosine-binding domain (PTB)"/>
    <property type="match status" value="1"/>
</dbReference>
<dbReference type="InterPro" id="IPR022812">
    <property type="entry name" value="Dynamin"/>
</dbReference>
<dbReference type="InterPro" id="IPR001401">
    <property type="entry name" value="Dynamin_GTPase"/>
</dbReference>
<dbReference type="InterPro" id="IPR019762">
    <property type="entry name" value="Dynamin_GTPase_CS"/>
</dbReference>
<dbReference type="InterPro" id="IPR045063">
    <property type="entry name" value="Dynamin_N"/>
</dbReference>
<dbReference type="InterPro" id="IPR000375">
    <property type="entry name" value="Dynamin_stalk"/>
</dbReference>
<dbReference type="InterPro" id="IPR030381">
    <property type="entry name" value="G_DYNAMIN_dom"/>
</dbReference>
<dbReference type="InterPro" id="IPR003130">
    <property type="entry name" value="GED"/>
</dbReference>
<dbReference type="InterPro" id="IPR020850">
    <property type="entry name" value="GED_dom"/>
</dbReference>
<dbReference type="InterPro" id="IPR027417">
    <property type="entry name" value="P-loop_NTPase"/>
</dbReference>
<dbReference type="InterPro" id="IPR011993">
    <property type="entry name" value="PH-like_dom_sf"/>
</dbReference>
<dbReference type="InterPro" id="IPR001849">
    <property type="entry name" value="PH_domain"/>
</dbReference>
<dbReference type="PANTHER" id="PTHR11566">
    <property type="entry name" value="DYNAMIN"/>
    <property type="match status" value="1"/>
</dbReference>
<dbReference type="PANTHER" id="PTHR11566:SF23">
    <property type="entry name" value="DYNAMIN-2"/>
    <property type="match status" value="1"/>
</dbReference>
<dbReference type="Pfam" id="PF01031">
    <property type="entry name" value="Dynamin_M"/>
    <property type="match status" value="1"/>
</dbReference>
<dbReference type="Pfam" id="PF00350">
    <property type="entry name" value="Dynamin_N"/>
    <property type="match status" value="1"/>
</dbReference>
<dbReference type="Pfam" id="PF02212">
    <property type="entry name" value="GED"/>
    <property type="match status" value="1"/>
</dbReference>
<dbReference type="Pfam" id="PF00169">
    <property type="entry name" value="PH"/>
    <property type="match status" value="1"/>
</dbReference>
<dbReference type="PRINTS" id="PR00195">
    <property type="entry name" value="DYNAMIN"/>
</dbReference>
<dbReference type="SMART" id="SM00053">
    <property type="entry name" value="DYNc"/>
    <property type="match status" value="1"/>
</dbReference>
<dbReference type="SMART" id="SM00302">
    <property type="entry name" value="GED"/>
    <property type="match status" value="1"/>
</dbReference>
<dbReference type="SMART" id="SM00233">
    <property type="entry name" value="PH"/>
    <property type="match status" value="1"/>
</dbReference>
<dbReference type="SUPFAM" id="SSF52540">
    <property type="entry name" value="P-loop containing nucleoside triphosphate hydrolases"/>
    <property type="match status" value="1"/>
</dbReference>
<dbReference type="SUPFAM" id="SSF50729">
    <property type="entry name" value="PH domain-like"/>
    <property type="match status" value="1"/>
</dbReference>
<dbReference type="PROSITE" id="PS00410">
    <property type="entry name" value="G_DYNAMIN_1"/>
    <property type="match status" value="1"/>
</dbReference>
<dbReference type="PROSITE" id="PS51718">
    <property type="entry name" value="G_DYNAMIN_2"/>
    <property type="match status" value="1"/>
</dbReference>
<dbReference type="PROSITE" id="PS51388">
    <property type="entry name" value="GED"/>
    <property type="match status" value="1"/>
</dbReference>
<dbReference type="PROSITE" id="PS50003">
    <property type="entry name" value="PH_DOMAIN"/>
    <property type="match status" value="1"/>
</dbReference>
<name>DYN2_BOVIN</name>